<protein>
    <recommendedName>
        <fullName evidence="1">GTPase Era</fullName>
    </recommendedName>
</protein>
<gene>
    <name evidence="1" type="primary">era</name>
    <name type="ordered locus">ECSE_2854</name>
</gene>
<organism>
    <name type="scientific">Escherichia coli (strain SE11)</name>
    <dbReference type="NCBI Taxonomy" id="409438"/>
    <lineage>
        <taxon>Bacteria</taxon>
        <taxon>Pseudomonadati</taxon>
        <taxon>Pseudomonadota</taxon>
        <taxon>Gammaproteobacteria</taxon>
        <taxon>Enterobacterales</taxon>
        <taxon>Enterobacteriaceae</taxon>
        <taxon>Escherichia</taxon>
    </lineage>
</organism>
<name>ERA_ECOSE</name>
<sequence length="301" mass="33796">MSIDKSYCGFIAIVGRPNVGKSTLLNKLLGQKISITSRKAQTTRHRIVGIHTEGAYQAIYVDTPGLHMEEKRAINRLMNKAASSSIGDVELVIFVVEGTRWTPDDEMVLNKLRDGKAPVILAVNKVDNVQEKADLLPHLQFLASQMNFLDIVPISAETGLNVDTIAAIVRKHLPEATHHFPEDYITDRSQRFMASEIIREKLMRFLGAELPYSVTVEIERFVSNERGGYDINGLILVEREGQKKMVIGNKGAKIKTIGIEARKDMQEMFEAPVHLELWVKVKSGWADDERALRSLGYVDDL</sequence>
<reference key="1">
    <citation type="journal article" date="2008" name="DNA Res.">
        <title>Complete genome sequence and comparative analysis of the wild-type commensal Escherichia coli strain SE11 isolated from a healthy adult.</title>
        <authorList>
            <person name="Oshima K."/>
            <person name="Toh H."/>
            <person name="Ogura Y."/>
            <person name="Sasamoto H."/>
            <person name="Morita H."/>
            <person name="Park S.-H."/>
            <person name="Ooka T."/>
            <person name="Iyoda S."/>
            <person name="Taylor T.D."/>
            <person name="Hayashi T."/>
            <person name="Itoh K."/>
            <person name="Hattori M."/>
        </authorList>
    </citation>
    <scope>NUCLEOTIDE SEQUENCE [LARGE SCALE GENOMIC DNA]</scope>
    <source>
        <strain>SE11</strain>
    </source>
</reference>
<proteinExistence type="inferred from homology"/>
<evidence type="ECO:0000255" key="1">
    <source>
        <dbReference type="HAMAP-Rule" id="MF_00367"/>
    </source>
</evidence>
<evidence type="ECO:0000255" key="2">
    <source>
        <dbReference type="PROSITE-ProRule" id="PRU01050"/>
    </source>
</evidence>
<keyword id="KW-0997">Cell inner membrane</keyword>
<keyword id="KW-1003">Cell membrane</keyword>
<keyword id="KW-0963">Cytoplasm</keyword>
<keyword id="KW-0342">GTP-binding</keyword>
<keyword id="KW-0472">Membrane</keyword>
<keyword id="KW-0547">Nucleotide-binding</keyword>
<keyword id="KW-0690">Ribosome biogenesis</keyword>
<keyword id="KW-0694">RNA-binding</keyword>
<keyword id="KW-0699">rRNA-binding</keyword>
<feature type="chain" id="PRO_1000121324" description="GTPase Era">
    <location>
        <begin position="1"/>
        <end position="301"/>
    </location>
</feature>
<feature type="domain" description="Era-type G" evidence="2">
    <location>
        <begin position="7"/>
        <end position="175"/>
    </location>
</feature>
<feature type="domain" description="KH type-2" evidence="1">
    <location>
        <begin position="206"/>
        <end position="283"/>
    </location>
</feature>
<feature type="region of interest" description="G1" evidence="2">
    <location>
        <begin position="15"/>
        <end position="22"/>
    </location>
</feature>
<feature type="region of interest" description="G2" evidence="2">
    <location>
        <begin position="41"/>
        <end position="45"/>
    </location>
</feature>
<feature type="region of interest" description="G3" evidence="2">
    <location>
        <begin position="62"/>
        <end position="65"/>
    </location>
</feature>
<feature type="region of interest" description="G4" evidence="2">
    <location>
        <begin position="124"/>
        <end position="127"/>
    </location>
</feature>
<feature type="region of interest" description="G5" evidence="2">
    <location>
        <begin position="154"/>
        <end position="156"/>
    </location>
</feature>
<feature type="binding site" evidence="1">
    <location>
        <begin position="15"/>
        <end position="22"/>
    </location>
    <ligand>
        <name>GTP</name>
        <dbReference type="ChEBI" id="CHEBI:37565"/>
    </ligand>
</feature>
<feature type="binding site" evidence="1">
    <location>
        <begin position="62"/>
        <end position="66"/>
    </location>
    <ligand>
        <name>GTP</name>
        <dbReference type="ChEBI" id="CHEBI:37565"/>
    </ligand>
</feature>
<feature type="binding site" evidence="1">
    <location>
        <begin position="124"/>
        <end position="127"/>
    </location>
    <ligand>
        <name>GTP</name>
        <dbReference type="ChEBI" id="CHEBI:37565"/>
    </ligand>
</feature>
<comment type="function">
    <text evidence="1">An essential GTPase that binds both GDP and GTP, with rapid nucleotide exchange. Plays a role in 16S rRNA processing and 30S ribosomal subunit biogenesis and possibly also in cell cycle regulation and energy metabolism.</text>
</comment>
<comment type="subunit">
    <text evidence="1">Monomer.</text>
</comment>
<comment type="subcellular location">
    <subcellularLocation>
        <location>Cytoplasm</location>
    </subcellularLocation>
    <subcellularLocation>
        <location evidence="1">Cell inner membrane</location>
        <topology evidence="1">Peripheral membrane protein</topology>
    </subcellularLocation>
</comment>
<comment type="similarity">
    <text evidence="1 2">Belongs to the TRAFAC class TrmE-Era-EngA-EngB-Septin-like GTPase superfamily. Era GTPase family.</text>
</comment>
<accession>B6I5E0</accession>
<dbReference type="EMBL" id="AP009240">
    <property type="protein sequence ID" value="BAG78378.1"/>
    <property type="molecule type" value="Genomic_DNA"/>
</dbReference>
<dbReference type="RefSeq" id="WP_000020737.1">
    <property type="nucleotide sequence ID" value="NC_011415.1"/>
</dbReference>
<dbReference type="SMR" id="B6I5E0"/>
<dbReference type="GeneID" id="93774525"/>
<dbReference type="KEGG" id="ecy:ECSE_2854"/>
<dbReference type="HOGENOM" id="CLU_038009_1_2_6"/>
<dbReference type="Proteomes" id="UP000008199">
    <property type="component" value="Chromosome"/>
</dbReference>
<dbReference type="GO" id="GO:0005829">
    <property type="term" value="C:cytosol"/>
    <property type="evidence" value="ECO:0007669"/>
    <property type="project" value="TreeGrafter"/>
</dbReference>
<dbReference type="GO" id="GO:0005886">
    <property type="term" value="C:plasma membrane"/>
    <property type="evidence" value="ECO:0007669"/>
    <property type="project" value="UniProtKB-SubCell"/>
</dbReference>
<dbReference type="GO" id="GO:0005525">
    <property type="term" value="F:GTP binding"/>
    <property type="evidence" value="ECO:0007669"/>
    <property type="project" value="UniProtKB-UniRule"/>
</dbReference>
<dbReference type="GO" id="GO:0003924">
    <property type="term" value="F:GTPase activity"/>
    <property type="evidence" value="ECO:0007669"/>
    <property type="project" value="UniProtKB-UniRule"/>
</dbReference>
<dbReference type="GO" id="GO:0043024">
    <property type="term" value="F:ribosomal small subunit binding"/>
    <property type="evidence" value="ECO:0007669"/>
    <property type="project" value="TreeGrafter"/>
</dbReference>
<dbReference type="GO" id="GO:0070181">
    <property type="term" value="F:small ribosomal subunit rRNA binding"/>
    <property type="evidence" value="ECO:0007669"/>
    <property type="project" value="UniProtKB-UniRule"/>
</dbReference>
<dbReference type="GO" id="GO:0000028">
    <property type="term" value="P:ribosomal small subunit assembly"/>
    <property type="evidence" value="ECO:0007669"/>
    <property type="project" value="TreeGrafter"/>
</dbReference>
<dbReference type="CDD" id="cd04163">
    <property type="entry name" value="Era"/>
    <property type="match status" value="1"/>
</dbReference>
<dbReference type="CDD" id="cd22534">
    <property type="entry name" value="KH-II_Era"/>
    <property type="match status" value="1"/>
</dbReference>
<dbReference type="FunFam" id="3.30.300.20:FF:000003">
    <property type="entry name" value="GTPase Era"/>
    <property type="match status" value="1"/>
</dbReference>
<dbReference type="FunFam" id="3.40.50.300:FF:000094">
    <property type="entry name" value="GTPase Era"/>
    <property type="match status" value="1"/>
</dbReference>
<dbReference type="Gene3D" id="3.30.300.20">
    <property type="match status" value="1"/>
</dbReference>
<dbReference type="Gene3D" id="3.40.50.300">
    <property type="entry name" value="P-loop containing nucleotide triphosphate hydrolases"/>
    <property type="match status" value="1"/>
</dbReference>
<dbReference type="HAMAP" id="MF_00367">
    <property type="entry name" value="GTPase_Era"/>
    <property type="match status" value="1"/>
</dbReference>
<dbReference type="InterPro" id="IPR030388">
    <property type="entry name" value="G_ERA_dom"/>
</dbReference>
<dbReference type="InterPro" id="IPR006073">
    <property type="entry name" value="GTP-bd"/>
</dbReference>
<dbReference type="InterPro" id="IPR005662">
    <property type="entry name" value="GTPase_Era-like"/>
</dbReference>
<dbReference type="InterPro" id="IPR015946">
    <property type="entry name" value="KH_dom-like_a/b"/>
</dbReference>
<dbReference type="InterPro" id="IPR004044">
    <property type="entry name" value="KH_dom_type_2"/>
</dbReference>
<dbReference type="InterPro" id="IPR009019">
    <property type="entry name" value="KH_sf_prok-type"/>
</dbReference>
<dbReference type="InterPro" id="IPR027417">
    <property type="entry name" value="P-loop_NTPase"/>
</dbReference>
<dbReference type="InterPro" id="IPR005225">
    <property type="entry name" value="Small_GTP-bd"/>
</dbReference>
<dbReference type="NCBIfam" id="TIGR00436">
    <property type="entry name" value="era"/>
    <property type="match status" value="1"/>
</dbReference>
<dbReference type="NCBIfam" id="NF000908">
    <property type="entry name" value="PRK00089.1"/>
    <property type="match status" value="1"/>
</dbReference>
<dbReference type="NCBIfam" id="TIGR00231">
    <property type="entry name" value="small_GTP"/>
    <property type="match status" value="1"/>
</dbReference>
<dbReference type="PANTHER" id="PTHR42698">
    <property type="entry name" value="GTPASE ERA"/>
    <property type="match status" value="1"/>
</dbReference>
<dbReference type="PANTHER" id="PTHR42698:SF1">
    <property type="entry name" value="GTPASE ERA, MITOCHONDRIAL"/>
    <property type="match status" value="1"/>
</dbReference>
<dbReference type="Pfam" id="PF07650">
    <property type="entry name" value="KH_2"/>
    <property type="match status" value="1"/>
</dbReference>
<dbReference type="Pfam" id="PF01926">
    <property type="entry name" value="MMR_HSR1"/>
    <property type="match status" value="1"/>
</dbReference>
<dbReference type="SUPFAM" id="SSF52540">
    <property type="entry name" value="P-loop containing nucleoside triphosphate hydrolases"/>
    <property type="match status" value="1"/>
</dbReference>
<dbReference type="SUPFAM" id="SSF54814">
    <property type="entry name" value="Prokaryotic type KH domain (KH-domain type II)"/>
    <property type="match status" value="1"/>
</dbReference>
<dbReference type="PROSITE" id="PS51713">
    <property type="entry name" value="G_ERA"/>
    <property type="match status" value="1"/>
</dbReference>
<dbReference type="PROSITE" id="PS50823">
    <property type="entry name" value="KH_TYPE_2"/>
    <property type="match status" value="1"/>
</dbReference>